<organism>
    <name type="scientific">Rickettsia rickettsii (strain Iowa)</name>
    <dbReference type="NCBI Taxonomy" id="452659"/>
    <lineage>
        <taxon>Bacteria</taxon>
        <taxon>Pseudomonadati</taxon>
        <taxon>Pseudomonadota</taxon>
        <taxon>Alphaproteobacteria</taxon>
        <taxon>Rickettsiales</taxon>
        <taxon>Rickettsiaceae</taxon>
        <taxon>Rickettsieae</taxon>
        <taxon>Rickettsia</taxon>
        <taxon>spotted fever group</taxon>
    </lineage>
</organism>
<protein>
    <recommendedName>
        <fullName evidence="1">Methionyl-tRNA formyltransferase</fullName>
        <ecNumber evidence="1">2.1.2.9</ecNumber>
    </recommendedName>
</protein>
<keyword id="KW-0648">Protein biosynthesis</keyword>
<keyword id="KW-0808">Transferase</keyword>
<gene>
    <name evidence="1" type="primary">fmt</name>
    <name type="ordered locus">RrIowa_0337</name>
</gene>
<proteinExistence type="inferred from homology"/>
<reference key="1">
    <citation type="journal article" date="2008" name="Infect. Immun.">
        <title>Genomic comparison of virulent Rickettsia rickettsii Sheila Smith and avirulent Rickettsia rickettsii Iowa.</title>
        <authorList>
            <person name="Ellison D.W."/>
            <person name="Clark T.R."/>
            <person name="Sturdevant D.E."/>
            <person name="Virtaneva K."/>
            <person name="Porcella S.F."/>
            <person name="Hackstadt T."/>
        </authorList>
    </citation>
    <scope>NUCLEOTIDE SEQUENCE [LARGE SCALE GENOMIC DNA]</scope>
    <source>
        <strain>Iowa</strain>
    </source>
</reference>
<accession>B0BWL1</accession>
<feature type="chain" id="PRO_1000077314" description="Methionyl-tRNA formyltransferase">
    <location>
        <begin position="1"/>
        <end position="303"/>
    </location>
</feature>
<feature type="binding site" evidence="1">
    <location>
        <begin position="108"/>
        <end position="111"/>
    </location>
    <ligand>
        <name>(6S)-5,6,7,8-tetrahydrofolate</name>
        <dbReference type="ChEBI" id="CHEBI:57453"/>
    </ligand>
</feature>
<name>FMT_RICRO</name>
<evidence type="ECO:0000255" key="1">
    <source>
        <dbReference type="HAMAP-Rule" id="MF_00182"/>
    </source>
</evidence>
<sequence>MKVIFMGTPEFAVPALKKLITHHEVKAVFTQQPKAKGRGLNLAKSPIHQLAFEHQIPVYTPSTLRNDEIINLINKVNADIIVVIAYGFIVPKAILEAKKYGCLNIHPSDLPRHRGAAPLQRTIIEGDRKSSVCIMRMDTGLDTGDILMKEDFDLEERITLEELHNKCANLGAELLIKTLANIDNIVPITQPSDGVTYAHKLTKAEGKINWHESAYKIDCKIRGMNPWPGVYFSYNDKIIKILEAEYLNADHHFTSGTVISDKLEIACGSGILRVKKLQQESKKALSIEEFLRGTNILKDTVLK</sequence>
<comment type="function">
    <text evidence="1">Attaches a formyl group to the free amino group of methionyl-tRNA(fMet). The formyl group appears to play a dual role in the initiator identity of N-formylmethionyl-tRNA by promoting its recognition by IF2 and preventing the misappropriation of this tRNA by the elongation apparatus.</text>
</comment>
<comment type="catalytic activity">
    <reaction evidence="1">
        <text>L-methionyl-tRNA(fMet) + (6R)-10-formyltetrahydrofolate = N-formyl-L-methionyl-tRNA(fMet) + (6S)-5,6,7,8-tetrahydrofolate + H(+)</text>
        <dbReference type="Rhea" id="RHEA:24380"/>
        <dbReference type="Rhea" id="RHEA-COMP:9952"/>
        <dbReference type="Rhea" id="RHEA-COMP:9953"/>
        <dbReference type="ChEBI" id="CHEBI:15378"/>
        <dbReference type="ChEBI" id="CHEBI:57453"/>
        <dbReference type="ChEBI" id="CHEBI:78530"/>
        <dbReference type="ChEBI" id="CHEBI:78844"/>
        <dbReference type="ChEBI" id="CHEBI:195366"/>
        <dbReference type="EC" id="2.1.2.9"/>
    </reaction>
</comment>
<comment type="similarity">
    <text evidence="1">Belongs to the Fmt family.</text>
</comment>
<dbReference type="EC" id="2.1.2.9" evidence="1"/>
<dbReference type="EMBL" id="CP000766">
    <property type="protein sequence ID" value="ABY72237.1"/>
    <property type="molecule type" value="Genomic_DNA"/>
</dbReference>
<dbReference type="RefSeq" id="WP_012262264.1">
    <property type="nucleotide sequence ID" value="NC_010263.3"/>
</dbReference>
<dbReference type="SMR" id="B0BWL1"/>
<dbReference type="GeneID" id="79937057"/>
<dbReference type="KEGG" id="rrj:RrIowa_0337"/>
<dbReference type="eggNOG" id="COG0223">
    <property type="taxonomic scope" value="Bacteria"/>
</dbReference>
<dbReference type="HOGENOM" id="CLU_033347_1_1_5"/>
<dbReference type="Proteomes" id="UP000000796">
    <property type="component" value="Chromosome"/>
</dbReference>
<dbReference type="GO" id="GO:0005829">
    <property type="term" value="C:cytosol"/>
    <property type="evidence" value="ECO:0007669"/>
    <property type="project" value="TreeGrafter"/>
</dbReference>
<dbReference type="GO" id="GO:0004479">
    <property type="term" value="F:methionyl-tRNA formyltransferase activity"/>
    <property type="evidence" value="ECO:0007669"/>
    <property type="project" value="UniProtKB-UniRule"/>
</dbReference>
<dbReference type="CDD" id="cd08646">
    <property type="entry name" value="FMT_core_Met-tRNA-FMT_N"/>
    <property type="match status" value="1"/>
</dbReference>
<dbReference type="CDD" id="cd08704">
    <property type="entry name" value="Met_tRNA_FMT_C"/>
    <property type="match status" value="1"/>
</dbReference>
<dbReference type="Gene3D" id="3.40.50.12230">
    <property type="match status" value="1"/>
</dbReference>
<dbReference type="HAMAP" id="MF_00182">
    <property type="entry name" value="Formyl_trans"/>
    <property type="match status" value="1"/>
</dbReference>
<dbReference type="InterPro" id="IPR005794">
    <property type="entry name" value="Fmt"/>
</dbReference>
<dbReference type="InterPro" id="IPR005793">
    <property type="entry name" value="Formyl_trans_C"/>
</dbReference>
<dbReference type="InterPro" id="IPR002376">
    <property type="entry name" value="Formyl_transf_N"/>
</dbReference>
<dbReference type="InterPro" id="IPR036477">
    <property type="entry name" value="Formyl_transf_N_sf"/>
</dbReference>
<dbReference type="InterPro" id="IPR011034">
    <property type="entry name" value="Formyl_transferase-like_C_sf"/>
</dbReference>
<dbReference type="InterPro" id="IPR044135">
    <property type="entry name" value="Met-tRNA-FMT_C"/>
</dbReference>
<dbReference type="InterPro" id="IPR041711">
    <property type="entry name" value="Met-tRNA-FMT_N"/>
</dbReference>
<dbReference type="NCBIfam" id="TIGR00460">
    <property type="entry name" value="fmt"/>
    <property type="match status" value="1"/>
</dbReference>
<dbReference type="PANTHER" id="PTHR11138">
    <property type="entry name" value="METHIONYL-TRNA FORMYLTRANSFERASE"/>
    <property type="match status" value="1"/>
</dbReference>
<dbReference type="PANTHER" id="PTHR11138:SF5">
    <property type="entry name" value="METHIONYL-TRNA FORMYLTRANSFERASE, MITOCHONDRIAL"/>
    <property type="match status" value="1"/>
</dbReference>
<dbReference type="Pfam" id="PF02911">
    <property type="entry name" value="Formyl_trans_C"/>
    <property type="match status" value="1"/>
</dbReference>
<dbReference type="Pfam" id="PF00551">
    <property type="entry name" value="Formyl_trans_N"/>
    <property type="match status" value="1"/>
</dbReference>
<dbReference type="SUPFAM" id="SSF50486">
    <property type="entry name" value="FMT C-terminal domain-like"/>
    <property type="match status" value="1"/>
</dbReference>
<dbReference type="SUPFAM" id="SSF53328">
    <property type="entry name" value="Formyltransferase"/>
    <property type="match status" value="1"/>
</dbReference>